<proteinExistence type="inferred from homology"/>
<protein>
    <recommendedName>
        <fullName evidence="1">Exodeoxyribonuclease 7 small subunit</fullName>
        <ecNumber evidence="1">3.1.11.6</ecNumber>
    </recommendedName>
    <alternativeName>
        <fullName evidence="1">Exodeoxyribonuclease VII small subunit</fullName>
        <shortName evidence="1">Exonuclease VII small subunit</shortName>
    </alternativeName>
</protein>
<name>EX7S_CHLTE</name>
<gene>
    <name evidence="1" type="primary">xseB</name>
    <name type="ordered locus">CT2214</name>
</gene>
<sequence>MPASSKSRTSAVPTIEELIQRLEEITRNIENPDTGLENSIALYEEGMSLAEECRKRLLETRKKLETINPAETARPAKPENAPESPRMNDLFGTES</sequence>
<keyword id="KW-0963">Cytoplasm</keyword>
<keyword id="KW-0269">Exonuclease</keyword>
<keyword id="KW-0378">Hydrolase</keyword>
<keyword id="KW-0540">Nuclease</keyword>
<keyword id="KW-1185">Reference proteome</keyword>
<comment type="function">
    <text evidence="1">Bidirectionally degrades single-stranded DNA into large acid-insoluble oligonucleotides, which are then degraded further into small acid-soluble oligonucleotides.</text>
</comment>
<comment type="catalytic activity">
    <reaction evidence="1">
        <text>Exonucleolytic cleavage in either 5'- to 3'- or 3'- to 5'-direction to yield nucleoside 5'-phosphates.</text>
        <dbReference type="EC" id="3.1.11.6"/>
    </reaction>
</comment>
<comment type="subunit">
    <text evidence="1">Heterooligomer composed of large and small subunits.</text>
</comment>
<comment type="subcellular location">
    <subcellularLocation>
        <location evidence="1">Cytoplasm</location>
    </subcellularLocation>
</comment>
<comment type="similarity">
    <text evidence="1">Belongs to the XseB family.</text>
</comment>
<feature type="chain" id="PRO_0000206936" description="Exodeoxyribonuclease 7 small subunit">
    <location>
        <begin position="1"/>
        <end position="95"/>
    </location>
</feature>
<feature type="region of interest" description="Disordered" evidence="2">
    <location>
        <begin position="65"/>
        <end position="95"/>
    </location>
</feature>
<organism>
    <name type="scientific">Chlorobaculum tepidum (strain ATCC 49652 / DSM 12025 / NBRC 103806 / TLS)</name>
    <name type="common">Chlorobium tepidum</name>
    <dbReference type="NCBI Taxonomy" id="194439"/>
    <lineage>
        <taxon>Bacteria</taxon>
        <taxon>Pseudomonadati</taxon>
        <taxon>Chlorobiota</taxon>
        <taxon>Chlorobiia</taxon>
        <taxon>Chlorobiales</taxon>
        <taxon>Chlorobiaceae</taxon>
        <taxon>Chlorobaculum</taxon>
    </lineage>
</organism>
<accession>Q8KAE9</accession>
<evidence type="ECO:0000255" key="1">
    <source>
        <dbReference type="HAMAP-Rule" id="MF_00337"/>
    </source>
</evidence>
<evidence type="ECO:0000256" key="2">
    <source>
        <dbReference type="SAM" id="MobiDB-lite"/>
    </source>
</evidence>
<dbReference type="EC" id="3.1.11.6" evidence="1"/>
<dbReference type="EMBL" id="AE006470">
    <property type="protein sequence ID" value="AAM73430.1"/>
    <property type="molecule type" value="Genomic_DNA"/>
</dbReference>
<dbReference type="RefSeq" id="NP_663088.1">
    <property type="nucleotide sequence ID" value="NC_002932.3"/>
</dbReference>
<dbReference type="RefSeq" id="WP_010933867.1">
    <property type="nucleotide sequence ID" value="NC_002932.3"/>
</dbReference>
<dbReference type="SMR" id="Q8KAE9"/>
<dbReference type="STRING" id="194439.CT2214"/>
<dbReference type="EnsemblBacteria" id="AAM73430">
    <property type="protein sequence ID" value="AAM73430"/>
    <property type="gene ID" value="CT2214"/>
</dbReference>
<dbReference type="KEGG" id="cte:CT2214"/>
<dbReference type="PATRIC" id="fig|194439.7.peg.2010"/>
<dbReference type="eggNOG" id="COG1722">
    <property type="taxonomic scope" value="Bacteria"/>
</dbReference>
<dbReference type="HOGENOM" id="CLU_145918_2_1_10"/>
<dbReference type="OrthoDB" id="598486at2"/>
<dbReference type="Proteomes" id="UP000001007">
    <property type="component" value="Chromosome"/>
</dbReference>
<dbReference type="GO" id="GO:0005829">
    <property type="term" value="C:cytosol"/>
    <property type="evidence" value="ECO:0007669"/>
    <property type="project" value="TreeGrafter"/>
</dbReference>
<dbReference type="GO" id="GO:0009318">
    <property type="term" value="C:exodeoxyribonuclease VII complex"/>
    <property type="evidence" value="ECO:0007669"/>
    <property type="project" value="InterPro"/>
</dbReference>
<dbReference type="GO" id="GO:0008855">
    <property type="term" value="F:exodeoxyribonuclease VII activity"/>
    <property type="evidence" value="ECO:0007669"/>
    <property type="project" value="UniProtKB-UniRule"/>
</dbReference>
<dbReference type="GO" id="GO:0006308">
    <property type="term" value="P:DNA catabolic process"/>
    <property type="evidence" value="ECO:0007669"/>
    <property type="project" value="UniProtKB-UniRule"/>
</dbReference>
<dbReference type="Gene3D" id="1.10.287.1040">
    <property type="entry name" value="Exonuclease VII, small subunit"/>
    <property type="match status" value="1"/>
</dbReference>
<dbReference type="HAMAP" id="MF_00337">
    <property type="entry name" value="Exonuc_7_S"/>
    <property type="match status" value="1"/>
</dbReference>
<dbReference type="InterPro" id="IPR003761">
    <property type="entry name" value="Exonuc_VII_S"/>
</dbReference>
<dbReference type="InterPro" id="IPR037004">
    <property type="entry name" value="Exonuc_VII_ssu_sf"/>
</dbReference>
<dbReference type="NCBIfam" id="TIGR01280">
    <property type="entry name" value="xseB"/>
    <property type="match status" value="1"/>
</dbReference>
<dbReference type="PANTHER" id="PTHR34137">
    <property type="entry name" value="EXODEOXYRIBONUCLEASE 7 SMALL SUBUNIT"/>
    <property type="match status" value="1"/>
</dbReference>
<dbReference type="PANTHER" id="PTHR34137:SF1">
    <property type="entry name" value="EXODEOXYRIBONUCLEASE 7 SMALL SUBUNIT"/>
    <property type="match status" value="1"/>
</dbReference>
<dbReference type="Pfam" id="PF02609">
    <property type="entry name" value="Exonuc_VII_S"/>
    <property type="match status" value="1"/>
</dbReference>
<dbReference type="PIRSF" id="PIRSF006488">
    <property type="entry name" value="Exonuc_VII_S"/>
    <property type="match status" value="1"/>
</dbReference>
<dbReference type="SUPFAM" id="SSF116842">
    <property type="entry name" value="XseB-like"/>
    <property type="match status" value="1"/>
</dbReference>
<reference key="1">
    <citation type="journal article" date="2002" name="Proc. Natl. Acad. Sci. U.S.A.">
        <title>The complete genome sequence of Chlorobium tepidum TLS, a photosynthetic, anaerobic, green-sulfur bacterium.</title>
        <authorList>
            <person name="Eisen J.A."/>
            <person name="Nelson K.E."/>
            <person name="Paulsen I.T."/>
            <person name="Heidelberg J.F."/>
            <person name="Wu M."/>
            <person name="Dodson R.J."/>
            <person name="DeBoy R.T."/>
            <person name="Gwinn M.L."/>
            <person name="Nelson W.C."/>
            <person name="Haft D.H."/>
            <person name="Hickey E.K."/>
            <person name="Peterson J.D."/>
            <person name="Durkin A.S."/>
            <person name="Kolonay J.F."/>
            <person name="Yang F."/>
            <person name="Holt I.E."/>
            <person name="Umayam L.A."/>
            <person name="Mason T.M."/>
            <person name="Brenner M."/>
            <person name="Shea T.P."/>
            <person name="Parksey D.S."/>
            <person name="Nierman W.C."/>
            <person name="Feldblyum T.V."/>
            <person name="Hansen C.L."/>
            <person name="Craven M.B."/>
            <person name="Radune D."/>
            <person name="Vamathevan J.J."/>
            <person name="Khouri H.M."/>
            <person name="White O."/>
            <person name="Gruber T.M."/>
            <person name="Ketchum K.A."/>
            <person name="Venter J.C."/>
            <person name="Tettelin H."/>
            <person name="Bryant D.A."/>
            <person name="Fraser C.M."/>
        </authorList>
    </citation>
    <scope>NUCLEOTIDE SEQUENCE [LARGE SCALE GENOMIC DNA]</scope>
    <source>
        <strain>ATCC 49652 / DSM 12025 / NBRC 103806 / TLS</strain>
    </source>
</reference>